<comment type="function">
    <text evidence="1">Plays a role in cell adhesion, and in cohesion of the endothelial monolayer at intercellular junctions in vascular tissue. Its expression may allow melanoma cells to interact with cellular elements of the vascular system, thereby enhancing hematogeneous tumor spread. Could be an adhesion molecule active in neural crest cells during embryonic development. Acts as a surface receptor that triggers tyrosine phosphorylation of FYN and PTK2/FAK1, and a transient increase in the intracellular calcium concentration (By similarity).</text>
</comment>
<comment type="subcellular location">
    <subcellularLocation>
        <location evidence="7">Cell membrane</location>
        <topology evidence="7">Single-pass type I membrane protein</topology>
    </subcellularLocation>
    <subcellularLocation>
        <location evidence="7">Perikaryon</location>
    </subcellularLocation>
    <text>Detected at the surface of the cell body of motor neurons.</text>
</comment>
<comment type="alternative products">
    <event type="alternative splicing"/>
    <isoform>
        <id>Q9EPF2-1</id>
        <name>1</name>
        <name>L-gicerin</name>
        <sequence type="displayed"/>
    </isoform>
    <isoform>
        <id>Q9EPF2-2</id>
        <name>2</name>
        <name>S-gicerin</name>
        <sequence type="described" ref="VSP_016941"/>
    </isoform>
</comment>
<comment type="tissue specificity">
    <text evidence="7">Detected in lung, uterus and placenta (at protein level). Detected in heart, lung, kidney, adrenal gland, intestine, testis, skeletal muscle and aorta. Detected at low levels in adult brain, in particular in brain stem and spinal cord, but also in hippocampus, olfactory bulb and striatum (at protein level).</text>
</comment>
<comment type="developmental stage">
    <text>Detected at high levels in brain throughout embryonic development (at protein level). Levels are lower in neonates and decrease during the first days after birth (at protein level).</text>
</comment>
<sequence>MGLPRLVCAFLFAACCCCRSATGVPGEEKQPTPTPDPVEVEVGNTALLKCGPAHPSGNFSQVEWFLIHKERQIPIFRVHQGKGQSEPGEYEHRLSLHGPGATLALSQVTPHDDRMFLCKSKQPRPQDHYVQLQVYKAPEEPTIQANVLGIHVDIQELKEVATCVGRNGYPIPQVIWYKNGRPLQEEENRVHIQSSQTVESSGLYTLKSVLSARLVKEDKDAQFYCELSYRLPSGNRMKESKEVTVPVLYPAEKVWVEVEPVGLLKEGDHVKIRCLTDGNPQPHFTINKKNPSTEEMEEESTDENGLLSLEPAQKHHSGVYQCQSLDLETTVMLSSDPLELLVNYVSDVQVDPTAPEVQEGDSLTLTCKAESNQDLEFEWLRDKTGQLLGKGPILQLNNVKREAGGRYLCVASVPSVPGLNRTRRVSVGIFGSPWMAAKERKVWAQENAMLNLSCEASGHPQPTISWNINGSATEWNPDPQTVVSTLNVLVTPELLETGAECTASNSLGSNTTVIILKLVTLTTLTPDSSQTTGLSTPTVSPHSRANSTSTEKKLPQQESKGVVIVAVIVCTLVLAVLGATLYYFYKKGKLPCGRSGKQEITLPPTRKSEFVVEVKSDKLPEEMALLQGSNGDKRAPGDQGEKYIDLRH</sequence>
<protein>
    <recommendedName>
        <fullName>Cell surface glycoprotein MUC18</fullName>
    </recommendedName>
    <alternativeName>
        <fullName>Gicerin</fullName>
    </alternativeName>
    <alternativeName>
        <fullName>Melanoma cell adhesion molecule</fullName>
    </alternativeName>
    <alternativeName>
        <fullName>Melanoma-associated antigen MUC18</fullName>
    </alternativeName>
    <cdAntigenName>CD146</cdAntigenName>
</protein>
<feature type="signal peptide" evidence="1">
    <location>
        <begin position="1"/>
        <end position="23"/>
    </location>
</feature>
<feature type="chain" id="PRO_0000045461" description="Cell surface glycoprotein MUC18">
    <location>
        <begin position="24"/>
        <end position="648"/>
    </location>
</feature>
<feature type="topological domain" description="Extracellular" evidence="4">
    <location>
        <begin position="24"/>
        <end position="560"/>
    </location>
</feature>
<feature type="transmembrane region" description="Helical" evidence="4">
    <location>
        <begin position="561"/>
        <end position="581"/>
    </location>
</feature>
<feature type="topological domain" description="Cytoplasmic" evidence="4">
    <location>
        <begin position="582"/>
        <end position="648"/>
    </location>
</feature>
<feature type="domain" description="Ig-like V-type 1">
    <location>
        <begin position="24"/>
        <end position="131"/>
    </location>
</feature>
<feature type="domain" description="Ig-like V-type 2">
    <location>
        <begin position="141"/>
        <end position="244"/>
    </location>
</feature>
<feature type="domain" description="Ig-like C2-type 1">
    <location>
        <begin position="246"/>
        <end position="332"/>
    </location>
</feature>
<feature type="domain" description="Ig-like C2-type 2">
    <location>
        <begin position="337"/>
        <end position="426"/>
    </location>
</feature>
<feature type="domain" description="Ig-like C2-type 3">
    <location>
        <begin position="432"/>
        <end position="512"/>
    </location>
</feature>
<feature type="region of interest" description="Disordered" evidence="6">
    <location>
        <begin position="282"/>
        <end position="304"/>
    </location>
</feature>
<feature type="region of interest" description="Disordered" evidence="6">
    <location>
        <begin position="527"/>
        <end position="554"/>
    </location>
</feature>
<feature type="region of interest" description="Disordered" evidence="6">
    <location>
        <begin position="626"/>
        <end position="648"/>
    </location>
</feature>
<feature type="compositionally biased region" description="Polar residues" evidence="6">
    <location>
        <begin position="527"/>
        <end position="549"/>
    </location>
</feature>
<feature type="compositionally biased region" description="Basic and acidic residues" evidence="6">
    <location>
        <begin position="631"/>
        <end position="648"/>
    </location>
</feature>
<feature type="modified residue" description="Phosphoserine" evidence="3">
    <location>
        <position position="608"/>
    </location>
</feature>
<feature type="modified residue" description="Phosphoserine" evidence="2">
    <location>
        <position position="616"/>
    </location>
</feature>
<feature type="glycosylation site" description="N-linked (GlcNAc...) asparagine" evidence="4">
    <location>
        <position position="58"/>
    </location>
</feature>
<feature type="glycosylation site" description="N-linked (GlcNAc...) asparagine" evidence="4">
    <location>
        <position position="510"/>
    </location>
</feature>
<feature type="disulfide bond" evidence="5">
    <location>
        <begin position="50"/>
        <end position="118"/>
    </location>
</feature>
<feature type="disulfide bond" evidence="5">
    <location>
        <begin position="163"/>
        <end position="225"/>
    </location>
</feature>
<feature type="disulfide bond" evidence="5">
    <location>
        <begin position="274"/>
        <end position="322"/>
    </location>
</feature>
<feature type="disulfide bond" evidence="5">
    <location>
        <begin position="367"/>
        <end position="409"/>
    </location>
</feature>
<feature type="disulfide bond" evidence="5">
    <location>
        <begin position="454"/>
        <end position="501"/>
    </location>
</feature>
<feature type="splice variant" id="VSP_016941" description="In isoform 2." evidence="8 9">
    <original>ITLPPTRKSEFVVEVKSDKLPEEMALLQGSNGDKRAPGDQGEKYIDLRH</original>
    <variation>MERNTSI</variation>
    <location>
        <begin position="600"/>
        <end position="648"/>
    </location>
</feature>
<feature type="sequence conflict" description="In Ref. 1; BAB16048/BAB16049." evidence="10" ref="1">
    <original>L</original>
    <variation>V</variation>
    <location>
        <position position="214"/>
    </location>
</feature>
<feature type="sequence conflict" description="In Ref. 1; BAB16048/BAB16049." evidence="10" ref="1">
    <original>L</original>
    <variation>V</variation>
    <location>
        <position position="227"/>
    </location>
</feature>
<feature type="sequence conflict" description="In Ref. 1; BAB16048/BAB16049." evidence="10" ref="1">
    <original>L</original>
    <variation>P</variation>
    <location>
        <position position="231"/>
    </location>
</feature>
<feature type="sequence conflict" description="In Ref. 1; BAB16048/BAB16049." evidence="10" ref="1">
    <original>N</original>
    <variation>Y</variation>
    <location>
        <position position="510"/>
    </location>
</feature>
<feature type="sequence conflict" description="In Ref. 1; BAB16048/BAB16049." evidence="10" ref="1">
    <original>P</original>
    <variation>H</variation>
    <location>
        <position position="526"/>
    </location>
</feature>
<proteinExistence type="evidence at protein level"/>
<reference key="1">
    <citation type="journal article" date="2004" name="J. Cell. Physiol.">
        <title>Characterization of Gicerin/MUC18/CD146 in the rat nervous system.</title>
        <authorList>
            <person name="Taira E."/>
            <person name="Kohama K."/>
            <person name="Tsukamoto Y."/>
            <person name="Okumura S."/>
            <person name="Miki N."/>
        </authorList>
    </citation>
    <scope>NUCLEOTIDE SEQUENCE [MRNA] (ISOFORMS 1 AND 2)</scope>
    <scope>SUBCELLULAR LOCATION</scope>
    <scope>TISSUE SPECIFICITY</scope>
    <source>
        <strain>Sprague-Dawley</strain>
        <tissue>Heart</tissue>
    </source>
</reference>
<reference key="2">
    <citation type="journal article" date="2004" name="Genome Res.">
        <title>The status, quality, and expansion of the NIH full-length cDNA project: the Mammalian Gene Collection (MGC).</title>
        <authorList>
            <consortium name="The MGC Project Team"/>
        </authorList>
    </citation>
    <scope>NUCLEOTIDE SEQUENCE [LARGE SCALE MRNA] (ISOFORM 2)</scope>
    <source>
        <tissue>Heart</tissue>
    </source>
</reference>
<keyword id="KW-0025">Alternative splicing</keyword>
<keyword id="KW-0130">Cell adhesion</keyword>
<keyword id="KW-1003">Cell membrane</keyword>
<keyword id="KW-1015">Disulfide bond</keyword>
<keyword id="KW-0325">Glycoprotein</keyword>
<keyword id="KW-0393">Immunoglobulin domain</keyword>
<keyword id="KW-0472">Membrane</keyword>
<keyword id="KW-0597">Phosphoprotein</keyword>
<keyword id="KW-1185">Reference proteome</keyword>
<keyword id="KW-0677">Repeat</keyword>
<keyword id="KW-0732">Signal</keyword>
<keyword id="KW-0812">Transmembrane</keyword>
<keyword id="KW-1133">Transmembrane helix</keyword>
<dbReference type="EMBL" id="AB035506">
    <property type="protein sequence ID" value="BAB16048.1"/>
    <property type="molecule type" value="mRNA"/>
</dbReference>
<dbReference type="EMBL" id="AB035507">
    <property type="protein sequence ID" value="BAB16049.1"/>
    <property type="molecule type" value="mRNA"/>
</dbReference>
<dbReference type="EMBL" id="BC070916">
    <property type="protein sequence ID" value="AAH70916.1"/>
    <property type="molecule type" value="mRNA"/>
</dbReference>
<dbReference type="RefSeq" id="NP_001029181.1">
    <molecule id="Q9EPF2-2"/>
    <property type="nucleotide sequence ID" value="NM_001034009.1"/>
</dbReference>
<dbReference type="RefSeq" id="NP_076473.2">
    <molecule id="Q9EPF2-1"/>
    <property type="nucleotide sequence ID" value="NM_023983.3"/>
</dbReference>
<dbReference type="SMR" id="Q9EPF2"/>
<dbReference type="BioGRID" id="249375">
    <property type="interactions" value="1"/>
</dbReference>
<dbReference type="FunCoup" id="Q9EPF2">
    <property type="interactions" value="324"/>
</dbReference>
<dbReference type="STRING" id="10116.ENSRNOP00000010464"/>
<dbReference type="GlyCosmos" id="Q9EPF2">
    <property type="glycosylation" value="2 sites, No reported glycans"/>
</dbReference>
<dbReference type="GlyGen" id="Q9EPF2">
    <property type="glycosylation" value="3 sites"/>
</dbReference>
<dbReference type="PhosphoSitePlus" id="Q9EPF2"/>
<dbReference type="SwissPalm" id="Q9EPF2"/>
<dbReference type="jPOST" id="Q9EPF2"/>
<dbReference type="PaxDb" id="10116-ENSRNOP00000010464"/>
<dbReference type="Ensembl" id="ENSRNOT00000010463.7">
    <molecule id="Q9EPF2-1"/>
    <property type="protein sequence ID" value="ENSRNOP00000010464.5"/>
    <property type="gene ID" value="ENSRNOG00000007726.8"/>
</dbReference>
<dbReference type="Ensembl" id="ENSRNOT00000090780.2">
    <molecule id="Q9EPF2-2"/>
    <property type="protein sequence ID" value="ENSRNOP00000069860.1"/>
    <property type="gene ID" value="ENSRNOG00000007726.8"/>
</dbReference>
<dbReference type="GeneID" id="78967"/>
<dbReference type="KEGG" id="rno:78967"/>
<dbReference type="UCSC" id="RGD:620463">
    <molecule id="Q9EPF2-1"/>
    <property type="organism name" value="rat"/>
</dbReference>
<dbReference type="AGR" id="RGD:620463"/>
<dbReference type="CTD" id="4162"/>
<dbReference type="RGD" id="620463">
    <property type="gene designation" value="Mcam"/>
</dbReference>
<dbReference type="eggNOG" id="ENOG502QV1U">
    <property type="taxonomic scope" value="Eukaryota"/>
</dbReference>
<dbReference type="GeneTree" id="ENSGT00940000155838"/>
<dbReference type="HOGENOM" id="CLU_028888_3_0_1"/>
<dbReference type="InParanoid" id="Q9EPF2"/>
<dbReference type="OMA" id="ANEHMTH"/>
<dbReference type="OrthoDB" id="10010939at2759"/>
<dbReference type="PhylomeDB" id="Q9EPF2"/>
<dbReference type="Reactome" id="R-RNO-8980692">
    <property type="pathway name" value="RHOA GTPase cycle"/>
</dbReference>
<dbReference type="Reactome" id="R-RNO-9013026">
    <property type="pathway name" value="RHOB GTPase cycle"/>
</dbReference>
<dbReference type="Reactome" id="R-RNO-9013149">
    <property type="pathway name" value="RAC1 GTPase cycle"/>
</dbReference>
<dbReference type="Reactome" id="R-RNO-9013404">
    <property type="pathway name" value="RAC2 GTPase cycle"/>
</dbReference>
<dbReference type="Reactome" id="R-RNO-9013405">
    <property type="pathway name" value="RHOD GTPase cycle"/>
</dbReference>
<dbReference type="Reactome" id="R-RNO-9013408">
    <property type="pathway name" value="RHOG GTPase cycle"/>
</dbReference>
<dbReference type="Reactome" id="R-RNO-9035034">
    <property type="pathway name" value="RHOF GTPase cycle"/>
</dbReference>
<dbReference type="PRO" id="PR:Q9EPF2"/>
<dbReference type="Proteomes" id="UP000002494">
    <property type="component" value="Chromosome 8"/>
</dbReference>
<dbReference type="Bgee" id="ENSRNOG00000007726">
    <property type="expression patterns" value="Expressed in lung and 20 other cell types or tissues"/>
</dbReference>
<dbReference type="GO" id="GO:0009897">
    <property type="term" value="C:external side of plasma membrane"/>
    <property type="evidence" value="ECO:0000266"/>
    <property type="project" value="RGD"/>
</dbReference>
<dbReference type="GO" id="GO:0005615">
    <property type="term" value="C:extracellular space"/>
    <property type="evidence" value="ECO:0000314"/>
    <property type="project" value="RGD"/>
</dbReference>
<dbReference type="GO" id="GO:0043204">
    <property type="term" value="C:perikaryon"/>
    <property type="evidence" value="ECO:0007669"/>
    <property type="project" value="UniProtKB-SubCell"/>
</dbReference>
<dbReference type="GO" id="GO:0005886">
    <property type="term" value="C:plasma membrane"/>
    <property type="evidence" value="ECO:0000318"/>
    <property type="project" value="GO_Central"/>
</dbReference>
<dbReference type="GO" id="GO:0005055">
    <property type="term" value="F:laminin receptor activity"/>
    <property type="evidence" value="ECO:0000318"/>
    <property type="project" value="GO_Central"/>
</dbReference>
<dbReference type="GO" id="GO:0001525">
    <property type="term" value="P:angiogenesis"/>
    <property type="evidence" value="ECO:0000266"/>
    <property type="project" value="RGD"/>
</dbReference>
<dbReference type="GO" id="GO:0003094">
    <property type="term" value="P:glomerular filtration"/>
    <property type="evidence" value="ECO:0000266"/>
    <property type="project" value="RGD"/>
</dbReference>
<dbReference type="GO" id="GO:0030335">
    <property type="term" value="P:positive regulation of cell migration"/>
    <property type="evidence" value="ECO:0000314"/>
    <property type="project" value="RGD"/>
</dbReference>
<dbReference type="GO" id="GO:0061042">
    <property type="term" value="P:vascular wound healing"/>
    <property type="evidence" value="ECO:0000266"/>
    <property type="project" value="RGD"/>
</dbReference>
<dbReference type="CDD" id="cd00096">
    <property type="entry name" value="Ig"/>
    <property type="match status" value="2"/>
</dbReference>
<dbReference type="FunFam" id="2.60.40.10:FF:001086">
    <property type="entry name" value="Cell surface glycoprotein MUC18"/>
    <property type="match status" value="1"/>
</dbReference>
<dbReference type="Gene3D" id="2.60.40.10">
    <property type="entry name" value="Immunoglobulins"/>
    <property type="match status" value="5"/>
</dbReference>
<dbReference type="InterPro" id="IPR013162">
    <property type="entry name" value="CD80_C2-set"/>
</dbReference>
<dbReference type="InterPro" id="IPR007110">
    <property type="entry name" value="Ig-like_dom"/>
</dbReference>
<dbReference type="InterPro" id="IPR036179">
    <property type="entry name" value="Ig-like_dom_sf"/>
</dbReference>
<dbReference type="InterPro" id="IPR013783">
    <property type="entry name" value="Ig-like_fold"/>
</dbReference>
<dbReference type="InterPro" id="IPR003599">
    <property type="entry name" value="Ig_sub"/>
</dbReference>
<dbReference type="InterPro" id="IPR003598">
    <property type="entry name" value="Ig_sub2"/>
</dbReference>
<dbReference type="InterPro" id="IPR013106">
    <property type="entry name" value="Ig_V-set"/>
</dbReference>
<dbReference type="InterPro" id="IPR013151">
    <property type="entry name" value="Immunoglobulin_dom"/>
</dbReference>
<dbReference type="InterPro" id="IPR051116">
    <property type="entry name" value="Surface_Rcpt/Adhesion_Mol"/>
</dbReference>
<dbReference type="PANTHER" id="PTHR11973:SF18">
    <property type="entry name" value="CELL SURFACE GLYCOPROTEIN MUC18"/>
    <property type="match status" value="1"/>
</dbReference>
<dbReference type="PANTHER" id="PTHR11973">
    <property type="entry name" value="CELL SURFACE GLYCOPROTEIN MUC18-RELATED"/>
    <property type="match status" value="1"/>
</dbReference>
<dbReference type="Pfam" id="PF08205">
    <property type="entry name" value="C2-set_2"/>
    <property type="match status" value="1"/>
</dbReference>
<dbReference type="Pfam" id="PF00047">
    <property type="entry name" value="ig"/>
    <property type="match status" value="1"/>
</dbReference>
<dbReference type="Pfam" id="PF13927">
    <property type="entry name" value="Ig_3"/>
    <property type="match status" value="2"/>
</dbReference>
<dbReference type="Pfam" id="PF07686">
    <property type="entry name" value="V-set"/>
    <property type="match status" value="1"/>
</dbReference>
<dbReference type="SMART" id="SM00409">
    <property type="entry name" value="IG"/>
    <property type="match status" value="4"/>
</dbReference>
<dbReference type="SMART" id="SM00408">
    <property type="entry name" value="IGc2"/>
    <property type="match status" value="5"/>
</dbReference>
<dbReference type="SUPFAM" id="SSF48726">
    <property type="entry name" value="Immunoglobulin"/>
    <property type="match status" value="5"/>
</dbReference>
<dbReference type="PROSITE" id="PS50835">
    <property type="entry name" value="IG_LIKE"/>
    <property type="match status" value="4"/>
</dbReference>
<evidence type="ECO:0000250" key="1"/>
<evidence type="ECO:0000250" key="2">
    <source>
        <dbReference type="UniProtKB" id="P43121"/>
    </source>
</evidence>
<evidence type="ECO:0000250" key="3">
    <source>
        <dbReference type="UniProtKB" id="Q8R2Y2"/>
    </source>
</evidence>
<evidence type="ECO:0000255" key="4"/>
<evidence type="ECO:0000255" key="5">
    <source>
        <dbReference type="PROSITE-ProRule" id="PRU00114"/>
    </source>
</evidence>
<evidence type="ECO:0000256" key="6">
    <source>
        <dbReference type="SAM" id="MobiDB-lite"/>
    </source>
</evidence>
<evidence type="ECO:0000269" key="7">
    <source>
    </source>
</evidence>
<evidence type="ECO:0000303" key="8">
    <source>
    </source>
</evidence>
<evidence type="ECO:0000303" key="9">
    <source>
    </source>
</evidence>
<evidence type="ECO:0000305" key="10"/>
<gene>
    <name type="primary">Mcam</name>
    <name type="synonym">Muc18</name>
</gene>
<accession>Q9EPF2</accession>
<accession>Q6IRH8</accession>
<accession>Q9ESS8</accession>
<name>MUC18_RAT</name>
<organism>
    <name type="scientific">Rattus norvegicus</name>
    <name type="common">Rat</name>
    <dbReference type="NCBI Taxonomy" id="10116"/>
    <lineage>
        <taxon>Eukaryota</taxon>
        <taxon>Metazoa</taxon>
        <taxon>Chordata</taxon>
        <taxon>Craniata</taxon>
        <taxon>Vertebrata</taxon>
        <taxon>Euteleostomi</taxon>
        <taxon>Mammalia</taxon>
        <taxon>Eutheria</taxon>
        <taxon>Euarchontoglires</taxon>
        <taxon>Glires</taxon>
        <taxon>Rodentia</taxon>
        <taxon>Myomorpha</taxon>
        <taxon>Muroidea</taxon>
        <taxon>Muridae</taxon>
        <taxon>Murinae</taxon>
        <taxon>Rattus</taxon>
    </lineage>
</organism>